<comment type="function">
    <text evidence="1">Binds to DNA and alters its conformation. May be involved in regulation of gene expression, nucleoid organization and DNA protection.</text>
</comment>
<comment type="subunit">
    <text evidence="1">Homodimer.</text>
</comment>
<comment type="subcellular location">
    <subcellularLocation>
        <location evidence="1">Cytoplasm</location>
        <location evidence="1">Nucleoid</location>
    </subcellularLocation>
</comment>
<comment type="similarity">
    <text evidence="1">Belongs to the YbaB/EbfC family.</text>
</comment>
<sequence>MMNMQNMMKQAQKLQKQMEKSQAELAATTFTGKSAQDLVVAELTGDKKVVNITFADAVVDPDDVETLQDMTVQALNDALGQIDEATKKSMGAFAGKLPF</sequence>
<evidence type="ECO:0000255" key="1">
    <source>
        <dbReference type="HAMAP-Rule" id="MF_00274"/>
    </source>
</evidence>
<accession>Q5M340</accession>
<proteinExistence type="inferred from homology"/>
<feature type="chain" id="PRO_1000003848" description="Nucleoid-associated protein stu1598">
    <location>
        <begin position="1"/>
        <end position="99"/>
    </location>
</feature>
<keyword id="KW-0963">Cytoplasm</keyword>
<keyword id="KW-0238">DNA-binding</keyword>
<keyword id="KW-1185">Reference proteome</keyword>
<reference key="1">
    <citation type="journal article" date="2004" name="Nat. Biotechnol.">
        <title>Complete sequence and comparative genome analysis of the dairy bacterium Streptococcus thermophilus.</title>
        <authorList>
            <person name="Bolotin A."/>
            <person name="Quinquis B."/>
            <person name="Renault P."/>
            <person name="Sorokin A."/>
            <person name="Ehrlich S.D."/>
            <person name="Kulakauskas S."/>
            <person name="Lapidus A."/>
            <person name="Goltsman E."/>
            <person name="Mazur M."/>
            <person name="Pusch G.D."/>
            <person name="Fonstein M."/>
            <person name="Overbeek R."/>
            <person name="Kyprides N."/>
            <person name="Purnelle B."/>
            <person name="Prozzi D."/>
            <person name="Ngui K."/>
            <person name="Masuy D."/>
            <person name="Hancy F."/>
            <person name="Burteau S."/>
            <person name="Boutry M."/>
            <person name="Delcour J."/>
            <person name="Goffeau A."/>
            <person name="Hols P."/>
        </authorList>
    </citation>
    <scope>NUCLEOTIDE SEQUENCE [LARGE SCALE GENOMIC DNA]</scope>
    <source>
        <strain>ATCC BAA-250 / LMG 18311</strain>
    </source>
</reference>
<protein>
    <recommendedName>
        <fullName evidence="1">Nucleoid-associated protein stu1598</fullName>
    </recommendedName>
</protein>
<organism>
    <name type="scientific">Streptococcus thermophilus (strain ATCC BAA-250 / LMG 18311)</name>
    <dbReference type="NCBI Taxonomy" id="264199"/>
    <lineage>
        <taxon>Bacteria</taxon>
        <taxon>Bacillati</taxon>
        <taxon>Bacillota</taxon>
        <taxon>Bacilli</taxon>
        <taxon>Lactobacillales</taxon>
        <taxon>Streptococcaceae</taxon>
        <taxon>Streptococcus</taxon>
    </lineage>
</organism>
<gene>
    <name type="ordered locus">stu1598</name>
</gene>
<name>Y1598_STRT2</name>
<dbReference type="EMBL" id="CP000023">
    <property type="protein sequence ID" value="AAV61201.1"/>
    <property type="molecule type" value="Genomic_DNA"/>
</dbReference>
<dbReference type="RefSeq" id="WP_002884818.1">
    <property type="nucleotide sequence ID" value="NC_006448.1"/>
</dbReference>
<dbReference type="SMR" id="Q5M340"/>
<dbReference type="STRING" id="264199.stu1598"/>
<dbReference type="KEGG" id="stl:stu1598"/>
<dbReference type="eggNOG" id="COG0718">
    <property type="taxonomic scope" value="Bacteria"/>
</dbReference>
<dbReference type="HOGENOM" id="CLU_140930_1_1_9"/>
<dbReference type="Proteomes" id="UP000001170">
    <property type="component" value="Chromosome"/>
</dbReference>
<dbReference type="GO" id="GO:0043590">
    <property type="term" value="C:bacterial nucleoid"/>
    <property type="evidence" value="ECO:0007669"/>
    <property type="project" value="UniProtKB-UniRule"/>
</dbReference>
<dbReference type="GO" id="GO:0005829">
    <property type="term" value="C:cytosol"/>
    <property type="evidence" value="ECO:0007669"/>
    <property type="project" value="TreeGrafter"/>
</dbReference>
<dbReference type="GO" id="GO:0003677">
    <property type="term" value="F:DNA binding"/>
    <property type="evidence" value="ECO:0007669"/>
    <property type="project" value="UniProtKB-UniRule"/>
</dbReference>
<dbReference type="Gene3D" id="3.30.1310.10">
    <property type="entry name" value="Nucleoid-associated protein YbaB-like domain"/>
    <property type="match status" value="1"/>
</dbReference>
<dbReference type="HAMAP" id="MF_00274">
    <property type="entry name" value="DNA_YbaB_EbfC"/>
    <property type="match status" value="1"/>
</dbReference>
<dbReference type="InterPro" id="IPR036894">
    <property type="entry name" value="YbaB-like_sf"/>
</dbReference>
<dbReference type="InterPro" id="IPR004401">
    <property type="entry name" value="YbaB/EbfC"/>
</dbReference>
<dbReference type="NCBIfam" id="TIGR00103">
    <property type="entry name" value="DNA_YbaB_EbfC"/>
    <property type="match status" value="1"/>
</dbReference>
<dbReference type="PANTHER" id="PTHR33449">
    <property type="entry name" value="NUCLEOID-ASSOCIATED PROTEIN YBAB"/>
    <property type="match status" value="1"/>
</dbReference>
<dbReference type="PANTHER" id="PTHR33449:SF1">
    <property type="entry name" value="NUCLEOID-ASSOCIATED PROTEIN YBAB"/>
    <property type="match status" value="1"/>
</dbReference>
<dbReference type="Pfam" id="PF02575">
    <property type="entry name" value="YbaB_DNA_bd"/>
    <property type="match status" value="1"/>
</dbReference>
<dbReference type="PIRSF" id="PIRSF004555">
    <property type="entry name" value="UCP004555"/>
    <property type="match status" value="1"/>
</dbReference>
<dbReference type="SUPFAM" id="SSF82607">
    <property type="entry name" value="YbaB-like"/>
    <property type="match status" value="1"/>
</dbReference>